<gene>
    <name evidence="1" type="primary">atpB</name>
</gene>
<dbReference type="EC" id="7.1.2.2" evidence="1"/>
<dbReference type="EMBL" id="EU262891">
    <property type="protein sequence ID" value="ABX10105.1"/>
    <property type="molecule type" value="Genomic_DNA"/>
</dbReference>
<dbReference type="RefSeq" id="YP_001687435.1">
    <property type="nucleotide sequence ID" value="NC_010362.1"/>
</dbReference>
<dbReference type="SMR" id="B0Z5B2"/>
<dbReference type="GeneID" id="5955407"/>
<dbReference type="GO" id="GO:0009535">
    <property type="term" value="C:chloroplast thylakoid membrane"/>
    <property type="evidence" value="ECO:0007669"/>
    <property type="project" value="UniProtKB-SubCell"/>
</dbReference>
<dbReference type="GO" id="GO:0005739">
    <property type="term" value="C:mitochondrion"/>
    <property type="evidence" value="ECO:0007669"/>
    <property type="project" value="GOC"/>
</dbReference>
<dbReference type="GO" id="GO:0045259">
    <property type="term" value="C:proton-transporting ATP synthase complex"/>
    <property type="evidence" value="ECO:0007669"/>
    <property type="project" value="UniProtKB-KW"/>
</dbReference>
<dbReference type="GO" id="GO:0005524">
    <property type="term" value="F:ATP binding"/>
    <property type="evidence" value="ECO:0007669"/>
    <property type="project" value="UniProtKB-UniRule"/>
</dbReference>
<dbReference type="GO" id="GO:0016887">
    <property type="term" value="F:ATP hydrolysis activity"/>
    <property type="evidence" value="ECO:0007669"/>
    <property type="project" value="InterPro"/>
</dbReference>
<dbReference type="GO" id="GO:0046933">
    <property type="term" value="F:proton-transporting ATP synthase activity, rotational mechanism"/>
    <property type="evidence" value="ECO:0007669"/>
    <property type="project" value="UniProtKB-UniRule"/>
</dbReference>
<dbReference type="GO" id="GO:0042776">
    <property type="term" value="P:proton motive force-driven mitochondrial ATP synthesis"/>
    <property type="evidence" value="ECO:0007669"/>
    <property type="project" value="TreeGrafter"/>
</dbReference>
<dbReference type="CDD" id="cd18110">
    <property type="entry name" value="ATP-synt_F1_beta_C"/>
    <property type="match status" value="1"/>
</dbReference>
<dbReference type="CDD" id="cd18115">
    <property type="entry name" value="ATP-synt_F1_beta_N"/>
    <property type="match status" value="1"/>
</dbReference>
<dbReference type="CDD" id="cd01133">
    <property type="entry name" value="F1-ATPase_beta_CD"/>
    <property type="match status" value="1"/>
</dbReference>
<dbReference type="FunFam" id="1.10.1140.10:FF:000001">
    <property type="entry name" value="ATP synthase subunit beta"/>
    <property type="match status" value="1"/>
</dbReference>
<dbReference type="FunFam" id="3.40.50.12240:FF:000006">
    <property type="entry name" value="ATP synthase subunit beta"/>
    <property type="match status" value="1"/>
</dbReference>
<dbReference type="FunFam" id="3.40.50.300:FF:000004">
    <property type="entry name" value="ATP synthase subunit beta"/>
    <property type="match status" value="1"/>
</dbReference>
<dbReference type="FunFam" id="2.40.10.170:FF:000002">
    <property type="entry name" value="ATP synthase subunit beta, chloroplastic"/>
    <property type="match status" value="1"/>
</dbReference>
<dbReference type="Gene3D" id="2.40.10.170">
    <property type="match status" value="1"/>
</dbReference>
<dbReference type="Gene3D" id="1.10.1140.10">
    <property type="entry name" value="Bovine Mitochondrial F1-atpase, Atp Synthase Beta Chain, Chain D, domain 3"/>
    <property type="match status" value="1"/>
</dbReference>
<dbReference type="Gene3D" id="3.40.50.300">
    <property type="entry name" value="P-loop containing nucleotide triphosphate hydrolases"/>
    <property type="match status" value="1"/>
</dbReference>
<dbReference type="HAMAP" id="MF_01347">
    <property type="entry name" value="ATP_synth_beta_bact"/>
    <property type="match status" value="1"/>
</dbReference>
<dbReference type="InterPro" id="IPR003593">
    <property type="entry name" value="AAA+_ATPase"/>
</dbReference>
<dbReference type="InterPro" id="IPR055190">
    <property type="entry name" value="ATP-synt_VA_C"/>
</dbReference>
<dbReference type="InterPro" id="IPR005722">
    <property type="entry name" value="ATP_synth_F1_bsu"/>
</dbReference>
<dbReference type="InterPro" id="IPR020003">
    <property type="entry name" value="ATPase_a/bsu_AS"/>
</dbReference>
<dbReference type="InterPro" id="IPR050053">
    <property type="entry name" value="ATPase_alpha/beta_chains"/>
</dbReference>
<dbReference type="InterPro" id="IPR004100">
    <property type="entry name" value="ATPase_F1/V1/A1_a/bsu_N"/>
</dbReference>
<dbReference type="InterPro" id="IPR036121">
    <property type="entry name" value="ATPase_F1/V1/A1_a/bsu_N_sf"/>
</dbReference>
<dbReference type="InterPro" id="IPR000194">
    <property type="entry name" value="ATPase_F1/V1/A1_a/bsu_nucl-bd"/>
</dbReference>
<dbReference type="InterPro" id="IPR024034">
    <property type="entry name" value="ATPase_F1/V1_b/a_C"/>
</dbReference>
<dbReference type="InterPro" id="IPR027417">
    <property type="entry name" value="P-loop_NTPase"/>
</dbReference>
<dbReference type="NCBIfam" id="TIGR01039">
    <property type="entry name" value="atpD"/>
    <property type="match status" value="1"/>
</dbReference>
<dbReference type="PANTHER" id="PTHR15184">
    <property type="entry name" value="ATP SYNTHASE"/>
    <property type="match status" value="1"/>
</dbReference>
<dbReference type="PANTHER" id="PTHR15184:SF71">
    <property type="entry name" value="ATP SYNTHASE SUBUNIT BETA, MITOCHONDRIAL"/>
    <property type="match status" value="1"/>
</dbReference>
<dbReference type="Pfam" id="PF00006">
    <property type="entry name" value="ATP-synt_ab"/>
    <property type="match status" value="1"/>
</dbReference>
<dbReference type="Pfam" id="PF02874">
    <property type="entry name" value="ATP-synt_ab_N"/>
    <property type="match status" value="1"/>
</dbReference>
<dbReference type="Pfam" id="PF22919">
    <property type="entry name" value="ATP-synt_VA_C"/>
    <property type="match status" value="1"/>
</dbReference>
<dbReference type="SMART" id="SM00382">
    <property type="entry name" value="AAA"/>
    <property type="match status" value="1"/>
</dbReference>
<dbReference type="SUPFAM" id="SSF47917">
    <property type="entry name" value="C-terminal domain of alpha and beta subunits of F1 ATP synthase"/>
    <property type="match status" value="1"/>
</dbReference>
<dbReference type="SUPFAM" id="SSF50615">
    <property type="entry name" value="N-terminal domain of alpha and beta subunits of F1 ATP synthase"/>
    <property type="match status" value="1"/>
</dbReference>
<dbReference type="SUPFAM" id="SSF52540">
    <property type="entry name" value="P-loop containing nucleoside triphosphate hydrolases"/>
    <property type="match status" value="1"/>
</dbReference>
<dbReference type="PROSITE" id="PS00152">
    <property type="entry name" value="ATPASE_ALPHA_BETA"/>
    <property type="match status" value="1"/>
</dbReference>
<geneLocation type="chloroplast"/>
<sequence>MRINPTTSGPGVSTLEKKKSGRIAQIIGPVLDVTFPPGKMPNIYNALVVKGRDTGGQEINVTCEVQQLLGNNRVRAVAMSATDGLTRGMEVIDTGAPLSVPVGGATLGRIFNVLGEPVDELGPVDTRTTSPIHRSAPAFIQLDTKLSIFETGIKVVDLLAPYRRGGKIGLFGGAGVGKTVLIMELINNIAKAHGGVSVFGGVGERTREGNDLYMEMKESGVINEQNIAESKVALVYGQMNEPPGARMRVGLTALTMAEYFRDVNKQNVLLFIDNIFRFVQAGSEVSALLGRMPSAVGYQPTLSTEMGSLQERITSTKAGSITSIQAVYVPADDLTDPAPATTFAHLDATTVLSRGLAAKGIYPAVDPLDSTSTMLQPRIVGDEHYETAQRVKETLQRYKELQDIISILGLDELSEEDRLTVARARKIERFLSQPFFVAEVFTGSPGKYVGLAETIRGFKLILSGELDGLPEQAFYLVGTIDEATAKAANLEMESDLKK</sequence>
<name>ATPB_OENPA</name>
<protein>
    <recommendedName>
        <fullName evidence="1">ATP synthase subunit beta, chloroplastic</fullName>
        <ecNumber evidence="1">7.1.2.2</ecNumber>
    </recommendedName>
    <alternativeName>
        <fullName evidence="1">ATP synthase F1 sector subunit beta</fullName>
    </alternativeName>
    <alternativeName>
        <fullName evidence="1">F-ATPase subunit beta</fullName>
    </alternativeName>
</protein>
<feature type="chain" id="PRO_0000339634" description="ATP synthase subunit beta, chloroplastic">
    <location>
        <begin position="1"/>
        <end position="498"/>
    </location>
</feature>
<feature type="binding site" evidence="1">
    <location>
        <begin position="172"/>
        <end position="179"/>
    </location>
    <ligand>
        <name>ATP</name>
        <dbReference type="ChEBI" id="CHEBI:30616"/>
    </ligand>
</feature>
<evidence type="ECO:0000255" key="1">
    <source>
        <dbReference type="HAMAP-Rule" id="MF_01347"/>
    </source>
</evidence>
<accession>B0Z5B2</accession>
<organism>
    <name type="scientific">Oenothera parviflora</name>
    <name type="common">Small-flowered evening primrose</name>
    <name type="synonym">Oenothera cruciata</name>
    <dbReference type="NCBI Taxonomy" id="482429"/>
    <lineage>
        <taxon>Eukaryota</taxon>
        <taxon>Viridiplantae</taxon>
        <taxon>Streptophyta</taxon>
        <taxon>Embryophyta</taxon>
        <taxon>Tracheophyta</taxon>
        <taxon>Spermatophyta</taxon>
        <taxon>Magnoliopsida</taxon>
        <taxon>eudicotyledons</taxon>
        <taxon>Gunneridae</taxon>
        <taxon>Pentapetalae</taxon>
        <taxon>rosids</taxon>
        <taxon>malvids</taxon>
        <taxon>Myrtales</taxon>
        <taxon>Onagraceae</taxon>
        <taxon>Onagroideae</taxon>
        <taxon>Onagreae</taxon>
        <taxon>Oenothera</taxon>
    </lineage>
</organism>
<proteinExistence type="inferred from homology"/>
<comment type="function">
    <text evidence="1">Produces ATP from ADP in the presence of a proton gradient across the membrane. The catalytic sites are hosted primarily by the beta subunits.</text>
</comment>
<comment type="catalytic activity">
    <reaction evidence="1">
        <text>ATP + H2O + 4 H(+)(in) = ADP + phosphate + 5 H(+)(out)</text>
        <dbReference type="Rhea" id="RHEA:57720"/>
        <dbReference type="ChEBI" id="CHEBI:15377"/>
        <dbReference type="ChEBI" id="CHEBI:15378"/>
        <dbReference type="ChEBI" id="CHEBI:30616"/>
        <dbReference type="ChEBI" id="CHEBI:43474"/>
        <dbReference type="ChEBI" id="CHEBI:456216"/>
        <dbReference type="EC" id="7.1.2.2"/>
    </reaction>
</comment>
<comment type="subunit">
    <text evidence="1">F-type ATPases have 2 components, CF(1) - the catalytic core - and CF(0) - the membrane proton channel. CF(1) has five subunits: alpha(3), beta(3), gamma(1), delta(1), epsilon(1). CF(0) has four main subunits: a(1), b(1), b'(1) and c(9-12).</text>
</comment>
<comment type="subcellular location">
    <subcellularLocation>
        <location evidence="1">Plastid</location>
        <location evidence="1">Chloroplast thylakoid membrane</location>
        <topology evidence="1">Peripheral membrane protein</topology>
    </subcellularLocation>
</comment>
<comment type="similarity">
    <text evidence="1">Belongs to the ATPase alpha/beta chains family.</text>
</comment>
<reference key="1">
    <citation type="journal article" date="2008" name="Nucleic Acids Res.">
        <title>The complete nucleotide sequences of the five genetically distinct plastid genomes of Oenothera, subsection Oenothera: I. Sequence evaluation and plastome evolution.</title>
        <authorList>
            <person name="Greiner S."/>
            <person name="Wang X."/>
            <person name="Rauwolf U."/>
            <person name="Silber M.V."/>
            <person name="Mayer K."/>
            <person name="Meurer J."/>
            <person name="Haberer G."/>
            <person name="Herrmann R.G."/>
        </authorList>
    </citation>
    <scope>NUCLEOTIDE SEQUENCE [LARGE SCALE GENOMIC DNA]</scope>
    <source>
        <strain>cv. Atrovirens</strain>
    </source>
</reference>
<keyword id="KW-0066">ATP synthesis</keyword>
<keyword id="KW-0067">ATP-binding</keyword>
<keyword id="KW-0139">CF(1)</keyword>
<keyword id="KW-0150">Chloroplast</keyword>
<keyword id="KW-0375">Hydrogen ion transport</keyword>
<keyword id="KW-0406">Ion transport</keyword>
<keyword id="KW-0472">Membrane</keyword>
<keyword id="KW-0547">Nucleotide-binding</keyword>
<keyword id="KW-0934">Plastid</keyword>
<keyword id="KW-0793">Thylakoid</keyword>
<keyword id="KW-1278">Translocase</keyword>
<keyword id="KW-0813">Transport</keyword>